<protein>
    <recommendedName>
        <fullName>ABI gene family member 3</fullName>
    </recommendedName>
    <alternativeName>
        <fullName>New molecule including SH3</fullName>
        <shortName>Nesh</shortName>
    </alternativeName>
</protein>
<accession>Q8BYZ1</accession>
<accession>Q3TA46</accession>
<accession>Q6PE63</accession>
<accession>Q9D7S4</accession>
<gene>
    <name type="primary">Abi3</name>
    <name type="synonym">Nesh</name>
</gene>
<sequence length="367" mass="39107">MAELQQLQQLQEFDIPTGREALRGNHSALLRVANYCEDNYLQATDKRKALEETMAFTTQALASVAYQVGNLAGHTLRMLDLQGAALRQVEAKMSTLGQMVNMHMEKVARREIGTLATVVRLPSNQKVIPPESLPSLTPYHRKPLNFACLDDIGHGVKDLSTQLSRTGTLSRKSIKAPATPVSATLGRPPRIPEPVQLPAVPDGKLSAASSASSLASAGSAEGASGIPQSKGQVAPATPPPPPVAPVTPPPPPLSAEVFLPPPPLEVSQPPLEAELPLPPPPALEGDELGLLPPPPPGFGPDEPSWVPASYLEKVVTLYPYTRQKDNELSFSEGTVICVTRRYSDGWCEGVSSEGTGFFPGNYVEPSC</sequence>
<reference key="1">
    <citation type="journal article" date="2005" name="Science">
        <title>The transcriptional landscape of the mammalian genome.</title>
        <authorList>
            <person name="Carninci P."/>
            <person name="Kasukawa T."/>
            <person name="Katayama S."/>
            <person name="Gough J."/>
            <person name="Frith M.C."/>
            <person name="Maeda N."/>
            <person name="Oyama R."/>
            <person name="Ravasi T."/>
            <person name="Lenhard B."/>
            <person name="Wells C."/>
            <person name="Kodzius R."/>
            <person name="Shimokawa K."/>
            <person name="Bajic V.B."/>
            <person name="Brenner S.E."/>
            <person name="Batalov S."/>
            <person name="Forrest A.R."/>
            <person name="Zavolan M."/>
            <person name="Davis M.J."/>
            <person name="Wilming L.G."/>
            <person name="Aidinis V."/>
            <person name="Allen J.E."/>
            <person name="Ambesi-Impiombato A."/>
            <person name="Apweiler R."/>
            <person name="Aturaliya R.N."/>
            <person name="Bailey T.L."/>
            <person name="Bansal M."/>
            <person name="Baxter L."/>
            <person name="Beisel K.W."/>
            <person name="Bersano T."/>
            <person name="Bono H."/>
            <person name="Chalk A.M."/>
            <person name="Chiu K.P."/>
            <person name="Choudhary V."/>
            <person name="Christoffels A."/>
            <person name="Clutterbuck D.R."/>
            <person name="Crowe M.L."/>
            <person name="Dalla E."/>
            <person name="Dalrymple B.P."/>
            <person name="de Bono B."/>
            <person name="Della Gatta G."/>
            <person name="di Bernardo D."/>
            <person name="Down T."/>
            <person name="Engstrom P."/>
            <person name="Fagiolini M."/>
            <person name="Faulkner G."/>
            <person name="Fletcher C.F."/>
            <person name="Fukushima T."/>
            <person name="Furuno M."/>
            <person name="Futaki S."/>
            <person name="Gariboldi M."/>
            <person name="Georgii-Hemming P."/>
            <person name="Gingeras T.R."/>
            <person name="Gojobori T."/>
            <person name="Green R.E."/>
            <person name="Gustincich S."/>
            <person name="Harbers M."/>
            <person name="Hayashi Y."/>
            <person name="Hensch T.K."/>
            <person name="Hirokawa N."/>
            <person name="Hill D."/>
            <person name="Huminiecki L."/>
            <person name="Iacono M."/>
            <person name="Ikeo K."/>
            <person name="Iwama A."/>
            <person name="Ishikawa T."/>
            <person name="Jakt M."/>
            <person name="Kanapin A."/>
            <person name="Katoh M."/>
            <person name="Kawasawa Y."/>
            <person name="Kelso J."/>
            <person name="Kitamura H."/>
            <person name="Kitano H."/>
            <person name="Kollias G."/>
            <person name="Krishnan S.P."/>
            <person name="Kruger A."/>
            <person name="Kummerfeld S.K."/>
            <person name="Kurochkin I.V."/>
            <person name="Lareau L.F."/>
            <person name="Lazarevic D."/>
            <person name="Lipovich L."/>
            <person name="Liu J."/>
            <person name="Liuni S."/>
            <person name="McWilliam S."/>
            <person name="Madan Babu M."/>
            <person name="Madera M."/>
            <person name="Marchionni L."/>
            <person name="Matsuda H."/>
            <person name="Matsuzawa S."/>
            <person name="Miki H."/>
            <person name="Mignone F."/>
            <person name="Miyake S."/>
            <person name="Morris K."/>
            <person name="Mottagui-Tabar S."/>
            <person name="Mulder N."/>
            <person name="Nakano N."/>
            <person name="Nakauchi H."/>
            <person name="Ng P."/>
            <person name="Nilsson R."/>
            <person name="Nishiguchi S."/>
            <person name="Nishikawa S."/>
            <person name="Nori F."/>
            <person name="Ohara O."/>
            <person name="Okazaki Y."/>
            <person name="Orlando V."/>
            <person name="Pang K.C."/>
            <person name="Pavan W.J."/>
            <person name="Pavesi G."/>
            <person name="Pesole G."/>
            <person name="Petrovsky N."/>
            <person name="Piazza S."/>
            <person name="Reed J."/>
            <person name="Reid J.F."/>
            <person name="Ring B.Z."/>
            <person name="Ringwald M."/>
            <person name="Rost B."/>
            <person name="Ruan Y."/>
            <person name="Salzberg S.L."/>
            <person name="Sandelin A."/>
            <person name="Schneider C."/>
            <person name="Schoenbach C."/>
            <person name="Sekiguchi K."/>
            <person name="Semple C.A."/>
            <person name="Seno S."/>
            <person name="Sessa L."/>
            <person name="Sheng Y."/>
            <person name="Shibata Y."/>
            <person name="Shimada H."/>
            <person name="Shimada K."/>
            <person name="Silva D."/>
            <person name="Sinclair B."/>
            <person name="Sperling S."/>
            <person name="Stupka E."/>
            <person name="Sugiura K."/>
            <person name="Sultana R."/>
            <person name="Takenaka Y."/>
            <person name="Taki K."/>
            <person name="Tammoja K."/>
            <person name="Tan S.L."/>
            <person name="Tang S."/>
            <person name="Taylor M.S."/>
            <person name="Tegner J."/>
            <person name="Teichmann S.A."/>
            <person name="Ueda H.R."/>
            <person name="van Nimwegen E."/>
            <person name="Verardo R."/>
            <person name="Wei C.L."/>
            <person name="Yagi K."/>
            <person name="Yamanishi H."/>
            <person name="Zabarovsky E."/>
            <person name="Zhu S."/>
            <person name="Zimmer A."/>
            <person name="Hide W."/>
            <person name="Bult C."/>
            <person name="Grimmond S.M."/>
            <person name="Teasdale R.D."/>
            <person name="Liu E.T."/>
            <person name="Brusic V."/>
            <person name="Quackenbush J."/>
            <person name="Wahlestedt C."/>
            <person name="Mattick J.S."/>
            <person name="Hume D.A."/>
            <person name="Kai C."/>
            <person name="Sasaki D."/>
            <person name="Tomaru Y."/>
            <person name="Fukuda S."/>
            <person name="Kanamori-Katayama M."/>
            <person name="Suzuki M."/>
            <person name="Aoki J."/>
            <person name="Arakawa T."/>
            <person name="Iida J."/>
            <person name="Imamura K."/>
            <person name="Itoh M."/>
            <person name="Kato T."/>
            <person name="Kawaji H."/>
            <person name="Kawagashira N."/>
            <person name="Kawashima T."/>
            <person name="Kojima M."/>
            <person name="Kondo S."/>
            <person name="Konno H."/>
            <person name="Nakano K."/>
            <person name="Ninomiya N."/>
            <person name="Nishio T."/>
            <person name="Okada M."/>
            <person name="Plessy C."/>
            <person name="Shibata K."/>
            <person name="Shiraki T."/>
            <person name="Suzuki S."/>
            <person name="Tagami M."/>
            <person name="Waki K."/>
            <person name="Watahiki A."/>
            <person name="Okamura-Oho Y."/>
            <person name="Suzuki H."/>
            <person name="Kawai J."/>
            <person name="Hayashizaki Y."/>
        </authorList>
    </citation>
    <scope>NUCLEOTIDE SEQUENCE [LARGE SCALE MRNA] (ISOFORMS 1 AND 2)</scope>
    <source>
        <strain>C57BL/6J</strain>
        <strain>NOD</strain>
        <tissue>Skin</tissue>
        <tissue>Spleen</tissue>
        <tissue>Stomach</tissue>
    </source>
</reference>
<reference key="2">
    <citation type="journal article" date="2009" name="PLoS Biol.">
        <title>Lineage-specific biology revealed by a finished genome assembly of the mouse.</title>
        <authorList>
            <person name="Church D.M."/>
            <person name="Goodstadt L."/>
            <person name="Hillier L.W."/>
            <person name="Zody M.C."/>
            <person name="Goldstein S."/>
            <person name="She X."/>
            <person name="Bult C.J."/>
            <person name="Agarwala R."/>
            <person name="Cherry J.L."/>
            <person name="DiCuccio M."/>
            <person name="Hlavina W."/>
            <person name="Kapustin Y."/>
            <person name="Meric P."/>
            <person name="Maglott D."/>
            <person name="Birtle Z."/>
            <person name="Marques A.C."/>
            <person name="Graves T."/>
            <person name="Zhou S."/>
            <person name="Teague B."/>
            <person name="Potamousis K."/>
            <person name="Churas C."/>
            <person name="Place M."/>
            <person name="Herschleb J."/>
            <person name="Runnheim R."/>
            <person name="Forrest D."/>
            <person name="Amos-Landgraf J."/>
            <person name="Schwartz D.C."/>
            <person name="Cheng Z."/>
            <person name="Lindblad-Toh K."/>
            <person name="Eichler E.E."/>
            <person name="Ponting C.P."/>
        </authorList>
    </citation>
    <scope>NUCLEOTIDE SEQUENCE [LARGE SCALE GENOMIC DNA]</scope>
    <source>
        <strain>C57BL/6J</strain>
    </source>
</reference>
<reference key="3">
    <citation type="submission" date="2005-07" db="EMBL/GenBank/DDBJ databases">
        <authorList>
            <person name="Mural R.J."/>
            <person name="Adams M.D."/>
            <person name="Myers E.W."/>
            <person name="Smith H.O."/>
            <person name="Venter J.C."/>
        </authorList>
    </citation>
    <scope>NUCLEOTIDE SEQUENCE [LARGE SCALE GENOMIC DNA]</scope>
</reference>
<reference key="4">
    <citation type="journal article" date="2004" name="Genome Res.">
        <title>The status, quality, and expansion of the NIH full-length cDNA project: the Mammalian Gene Collection (MGC).</title>
        <authorList>
            <consortium name="The MGC Project Team"/>
        </authorList>
    </citation>
    <scope>NUCLEOTIDE SEQUENCE [LARGE SCALE MRNA] (ISOFORM 1)</scope>
    <source>
        <strain>FVB/N</strain>
        <tissue>Colon</tissue>
    </source>
</reference>
<reference key="5">
    <citation type="journal article" date="2002" name="Cancer Res.">
        <title>Forced expression of NESH suppresses motility and metastatic dissemination of malignant cells.</title>
        <authorList>
            <person name="Ichigotani Y."/>
            <person name="Yokozaki S."/>
            <person name="Fukuda Y."/>
            <person name="Hamaguchi M."/>
            <person name="Matsuda S."/>
        </authorList>
    </citation>
    <scope>FUNCTION</scope>
</reference>
<reference key="6">
    <citation type="journal article" date="2010" name="Cell">
        <title>A tissue-specific atlas of mouse protein phosphorylation and expression.</title>
        <authorList>
            <person name="Huttlin E.L."/>
            <person name="Jedrychowski M.P."/>
            <person name="Elias J.E."/>
            <person name="Goswami T."/>
            <person name="Rad R."/>
            <person name="Beausoleil S.A."/>
            <person name="Villen J."/>
            <person name="Haas W."/>
            <person name="Sowa M.E."/>
            <person name="Gygi S.P."/>
        </authorList>
    </citation>
    <scope>PHOSPHORYLATION [LARGE SCALE ANALYSIS] AT SER-216 AND SER-219</scope>
    <scope>IDENTIFICATION BY MASS SPECTROMETRY [LARGE SCALE ANALYSIS]</scope>
    <source>
        <tissue>Brain</tissue>
        <tissue>Brown adipose tissue</tissue>
        <tissue>Kidney</tissue>
        <tissue>Liver</tissue>
        <tissue>Pancreas</tissue>
        <tissue>Spleen</tissue>
    </source>
</reference>
<keyword id="KW-0025">Alternative splicing</keyword>
<keyword id="KW-0175">Coiled coil</keyword>
<keyword id="KW-0963">Cytoplasm</keyword>
<keyword id="KW-0597">Phosphoprotein</keyword>
<keyword id="KW-1185">Reference proteome</keyword>
<keyword id="KW-0728">SH3 domain</keyword>
<proteinExistence type="evidence at protein level"/>
<organism>
    <name type="scientific">Mus musculus</name>
    <name type="common">Mouse</name>
    <dbReference type="NCBI Taxonomy" id="10090"/>
    <lineage>
        <taxon>Eukaryota</taxon>
        <taxon>Metazoa</taxon>
        <taxon>Chordata</taxon>
        <taxon>Craniata</taxon>
        <taxon>Vertebrata</taxon>
        <taxon>Euteleostomi</taxon>
        <taxon>Mammalia</taxon>
        <taxon>Eutheria</taxon>
        <taxon>Euarchontoglires</taxon>
        <taxon>Glires</taxon>
        <taxon>Rodentia</taxon>
        <taxon>Myomorpha</taxon>
        <taxon>Muroidea</taxon>
        <taxon>Muridae</taxon>
        <taxon>Murinae</taxon>
        <taxon>Mus</taxon>
        <taxon>Mus</taxon>
    </lineage>
</organism>
<comment type="function">
    <text evidence="6">Inhibits ectopic tumor cell metastasis of SRD cells. In vitro, reduces cell motility.</text>
</comment>
<comment type="subunit">
    <text evidence="1">May interact with PAK1 and PAK2. Probably interacts with TARSH (By similarity).</text>
</comment>
<comment type="subcellular location">
    <subcellularLocation>
        <location evidence="1">Cytoplasm</location>
    </subcellularLocation>
</comment>
<comment type="alternative products">
    <event type="alternative splicing"/>
    <isoform>
        <id>Q8BYZ1-1</id>
        <name>1</name>
        <sequence type="displayed"/>
    </isoform>
    <isoform>
        <id>Q8BYZ1-2</id>
        <name>2</name>
        <sequence type="described" ref="VSP_010773"/>
    </isoform>
</comment>
<comment type="similarity">
    <text evidence="8">Belongs to the ABI family.</text>
</comment>
<dbReference type="EMBL" id="AK008928">
    <property type="protein sequence ID" value="BAB25972.1"/>
    <property type="molecule type" value="mRNA"/>
</dbReference>
<dbReference type="EMBL" id="AK037144">
    <property type="protein sequence ID" value="BAC29720.1"/>
    <property type="molecule type" value="mRNA"/>
</dbReference>
<dbReference type="EMBL" id="AK172098">
    <property type="protein sequence ID" value="BAE42824.1"/>
    <property type="molecule type" value="mRNA"/>
</dbReference>
<dbReference type="EMBL" id="AL593858">
    <property type="protein sequence ID" value="CAM15513.1"/>
    <property type="molecule type" value="Genomic_DNA"/>
</dbReference>
<dbReference type="EMBL" id="CH466556">
    <property type="protein sequence ID" value="EDL15995.1"/>
    <property type="molecule type" value="Genomic_DNA"/>
</dbReference>
<dbReference type="EMBL" id="BC058260">
    <property type="protein sequence ID" value="AAH58260.1"/>
    <property type="molecule type" value="mRNA"/>
</dbReference>
<dbReference type="CCDS" id="CCDS25283.1">
    <molecule id="Q8BYZ1-1"/>
</dbReference>
<dbReference type="RefSeq" id="NP_001156936.1">
    <molecule id="Q8BYZ1-2"/>
    <property type="nucleotide sequence ID" value="NM_001163464.1"/>
</dbReference>
<dbReference type="RefSeq" id="NP_079935.1">
    <molecule id="Q8BYZ1-1"/>
    <property type="nucleotide sequence ID" value="NM_025659.4"/>
</dbReference>
<dbReference type="RefSeq" id="XP_017170199.1">
    <molecule id="Q8BYZ1-2"/>
    <property type="nucleotide sequence ID" value="XM_017314710.3"/>
</dbReference>
<dbReference type="SMR" id="Q8BYZ1"/>
<dbReference type="BioGRID" id="211593">
    <property type="interactions" value="4"/>
</dbReference>
<dbReference type="FunCoup" id="Q8BYZ1">
    <property type="interactions" value="198"/>
</dbReference>
<dbReference type="IntAct" id="Q8BYZ1">
    <property type="interactions" value="1"/>
</dbReference>
<dbReference type="MINT" id="Q8BYZ1"/>
<dbReference type="STRING" id="10090.ENSMUSP00000061893"/>
<dbReference type="GlyGen" id="Q8BYZ1">
    <property type="glycosylation" value="2 sites"/>
</dbReference>
<dbReference type="iPTMnet" id="Q8BYZ1"/>
<dbReference type="PhosphoSitePlus" id="Q8BYZ1"/>
<dbReference type="jPOST" id="Q8BYZ1"/>
<dbReference type="PaxDb" id="10090-ENSMUSP00000061893"/>
<dbReference type="ProteomicsDB" id="285629">
    <molecule id="Q8BYZ1-1"/>
</dbReference>
<dbReference type="ProteomicsDB" id="285630">
    <molecule id="Q8BYZ1-2"/>
</dbReference>
<dbReference type="Antibodypedia" id="53503">
    <property type="antibodies" value="90 antibodies from 22 providers"/>
</dbReference>
<dbReference type="DNASU" id="66610"/>
<dbReference type="Ensembl" id="ENSMUST00000059026.10">
    <molecule id="Q8BYZ1-1"/>
    <property type="protein sequence ID" value="ENSMUSP00000061893.4"/>
    <property type="gene ID" value="ENSMUSG00000018381.16"/>
</dbReference>
<dbReference type="GeneID" id="66610"/>
<dbReference type="KEGG" id="mmu:66610"/>
<dbReference type="UCSC" id="uc007lat.2">
    <molecule id="Q8BYZ1-1"/>
    <property type="organism name" value="mouse"/>
</dbReference>
<dbReference type="AGR" id="MGI:1913860"/>
<dbReference type="CTD" id="51225"/>
<dbReference type="MGI" id="MGI:1913860">
    <property type="gene designation" value="Abi3"/>
</dbReference>
<dbReference type="VEuPathDB" id="HostDB:ENSMUSG00000018381"/>
<dbReference type="eggNOG" id="KOG2546">
    <property type="taxonomic scope" value="Eukaryota"/>
</dbReference>
<dbReference type="GeneTree" id="ENSGT00940000161380"/>
<dbReference type="HOGENOM" id="CLU_035421_0_0_1"/>
<dbReference type="InParanoid" id="Q8BYZ1"/>
<dbReference type="OMA" id="NVAYHIQ"/>
<dbReference type="OrthoDB" id="5971719at2759"/>
<dbReference type="PhylomeDB" id="Q8BYZ1"/>
<dbReference type="TreeFam" id="TF314303"/>
<dbReference type="BioGRID-ORCS" id="66610">
    <property type="hits" value="1 hit in 78 CRISPR screens"/>
</dbReference>
<dbReference type="ChiTaRS" id="Abi3">
    <property type="organism name" value="mouse"/>
</dbReference>
<dbReference type="PRO" id="PR:Q8BYZ1"/>
<dbReference type="Proteomes" id="UP000000589">
    <property type="component" value="Chromosome 11"/>
</dbReference>
<dbReference type="RNAct" id="Q8BYZ1">
    <property type="molecule type" value="protein"/>
</dbReference>
<dbReference type="Bgee" id="ENSMUSG00000018381">
    <property type="expression patterns" value="Expressed in thymus and 115 other cell types or tissues"/>
</dbReference>
<dbReference type="ExpressionAtlas" id="Q8BYZ1">
    <property type="expression patterns" value="baseline and differential"/>
</dbReference>
<dbReference type="GO" id="GO:0043198">
    <property type="term" value="C:dendritic shaft"/>
    <property type="evidence" value="ECO:0000250"/>
    <property type="project" value="ARUK-UCL"/>
</dbReference>
<dbReference type="GO" id="GO:0043197">
    <property type="term" value="C:dendritic spine"/>
    <property type="evidence" value="ECO:0000250"/>
    <property type="project" value="ARUK-UCL"/>
</dbReference>
<dbReference type="GO" id="GO:0098978">
    <property type="term" value="C:glutamatergic synapse"/>
    <property type="evidence" value="ECO:0007669"/>
    <property type="project" value="Ensembl"/>
</dbReference>
<dbReference type="GO" id="GO:0030027">
    <property type="term" value="C:lamellipodium"/>
    <property type="evidence" value="ECO:0000314"/>
    <property type="project" value="ARUK-UCL"/>
</dbReference>
<dbReference type="GO" id="GO:0014069">
    <property type="term" value="C:postsynaptic density"/>
    <property type="evidence" value="ECO:0000250"/>
    <property type="project" value="ARUK-UCL"/>
</dbReference>
<dbReference type="GO" id="GO:0031209">
    <property type="term" value="C:SCAR complex"/>
    <property type="evidence" value="ECO:0000314"/>
    <property type="project" value="ARUK-UCL"/>
</dbReference>
<dbReference type="GO" id="GO:0051015">
    <property type="term" value="F:actin filament binding"/>
    <property type="evidence" value="ECO:0000250"/>
    <property type="project" value="ARUK-UCL"/>
</dbReference>
<dbReference type="GO" id="GO:0042802">
    <property type="term" value="F:identical protein binding"/>
    <property type="evidence" value="ECO:0007669"/>
    <property type="project" value="Ensembl"/>
</dbReference>
<dbReference type="GO" id="GO:0030036">
    <property type="term" value="P:actin cytoskeleton organization"/>
    <property type="evidence" value="ECO:0000250"/>
    <property type="project" value="ARUK-UCL"/>
</dbReference>
<dbReference type="GO" id="GO:0002357">
    <property type="term" value="P:defense response to tumor cell"/>
    <property type="evidence" value="ECO:0000314"/>
    <property type="project" value="ARUK-UCL"/>
</dbReference>
<dbReference type="GO" id="GO:0098885">
    <property type="term" value="P:modification of postsynaptic actin cytoskeleton"/>
    <property type="evidence" value="ECO:0007669"/>
    <property type="project" value="Ensembl"/>
</dbReference>
<dbReference type="GO" id="GO:0010593">
    <property type="term" value="P:negative regulation of lamellipodium assembly"/>
    <property type="evidence" value="ECO:0000315"/>
    <property type="project" value="ARUK-UCL"/>
</dbReference>
<dbReference type="GO" id="GO:1903077">
    <property type="term" value="P:negative regulation of protein localization to plasma membrane"/>
    <property type="evidence" value="ECO:0000315"/>
    <property type="project" value="ARUK-UCL"/>
</dbReference>
<dbReference type="GO" id="GO:2000774">
    <property type="term" value="P:positive regulation of cellular senescence"/>
    <property type="evidence" value="ECO:0000250"/>
    <property type="project" value="ARUK-UCL"/>
</dbReference>
<dbReference type="GO" id="GO:0030334">
    <property type="term" value="P:regulation of cell migration"/>
    <property type="evidence" value="ECO:0000266"/>
    <property type="project" value="MGI"/>
</dbReference>
<dbReference type="GO" id="GO:0061001">
    <property type="term" value="P:regulation of dendritic spine morphogenesis"/>
    <property type="evidence" value="ECO:0000250"/>
    <property type="project" value="ARUK-UCL"/>
</dbReference>
<dbReference type="GO" id="GO:0099151">
    <property type="term" value="P:regulation of postsynaptic density assembly"/>
    <property type="evidence" value="ECO:0000250"/>
    <property type="project" value="ARUK-UCL"/>
</dbReference>
<dbReference type="CDD" id="cd11826">
    <property type="entry name" value="SH3_Abi"/>
    <property type="match status" value="1"/>
</dbReference>
<dbReference type="FunFam" id="2.30.30.40:FF:000170">
    <property type="entry name" value="ABI gene family member 3"/>
    <property type="match status" value="1"/>
</dbReference>
<dbReference type="Gene3D" id="6.10.140.1620">
    <property type="match status" value="1"/>
</dbReference>
<dbReference type="Gene3D" id="2.30.30.40">
    <property type="entry name" value="SH3 Domains"/>
    <property type="match status" value="1"/>
</dbReference>
<dbReference type="InterPro" id="IPR028457">
    <property type="entry name" value="ABI"/>
</dbReference>
<dbReference type="InterPro" id="IPR028455">
    <property type="entry name" value="ABI3_SH3"/>
</dbReference>
<dbReference type="InterPro" id="IPR012849">
    <property type="entry name" value="Abl-interactor_HHR_dom"/>
</dbReference>
<dbReference type="InterPro" id="IPR036028">
    <property type="entry name" value="SH3-like_dom_sf"/>
</dbReference>
<dbReference type="InterPro" id="IPR001452">
    <property type="entry name" value="SH3_domain"/>
</dbReference>
<dbReference type="PANTHER" id="PTHR10460:SF7">
    <property type="entry name" value="ABI GENE FAMILY MEMBER 3"/>
    <property type="match status" value="1"/>
</dbReference>
<dbReference type="PANTHER" id="PTHR10460">
    <property type="entry name" value="ABL INTERACTOR FAMILY MEMBER"/>
    <property type="match status" value="1"/>
</dbReference>
<dbReference type="Pfam" id="PF07815">
    <property type="entry name" value="Abi_HHR"/>
    <property type="match status" value="1"/>
</dbReference>
<dbReference type="Pfam" id="PF14604">
    <property type="entry name" value="SH3_9"/>
    <property type="match status" value="1"/>
</dbReference>
<dbReference type="PRINTS" id="PR00452">
    <property type="entry name" value="SH3DOMAIN"/>
</dbReference>
<dbReference type="SMART" id="SM00326">
    <property type="entry name" value="SH3"/>
    <property type="match status" value="1"/>
</dbReference>
<dbReference type="SUPFAM" id="SSF50044">
    <property type="entry name" value="SH3-domain"/>
    <property type="match status" value="1"/>
</dbReference>
<dbReference type="PROSITE" id="PS50002">
    <property type="entry name" value="SH3"/>
    <property type="match status" value="1"/>
</dbReference>
<name>ABI3_MOUSE</name>
<evidence type="ECO:0000250" key="1"/>
<evidence type="ECO:0000250" key="2">
    <source>
        <dbReference type="UniProtKB" id="Q9P2A4"/>
    </source>
</evidence>
<evidence type="ECO:0000255" key="3"/>
<evidence type="ECO:0000255" key="4">
    <source>
        <dbReference type="PROSITE-ProRule" id="PRU00192"/>
    </source>
</evidence>
<evidence type="ECO:0000256" key="5">
    <source>
        <dbReference type="SAM" id="MobiDB-lite"/>
    </source>
</evidence>
<evidence type="ECO:0000269" key="6">
    <source>
    </source>
</evidence>
<evidence type="ECO:0000303" key="7">
    <source>
    </source>
</evidence>
<evidence type="ECO:0000305" key="8"/>
<evidence type="ECO:0007744" key="9">
    <source>
    </source>
</evidence>
<feature type="chain" id="PRO_0000191793" description="ABI gene family member 3">
    <location>
        <begin position="1"/>
        <end position="367"/>
    </location>
</feature>
<feature type="domain" description="SH3" evidence="4">
    <location>
        <begin position="309"/>
        <end position="367"/>
    </location>
</feature>
<feature type="region of interest" description="Disordered" evidence="5">
    <location>
        <begin position="163"/>
        <end position="273"/>
    </location>
</feature>
<feature type="coiled-coil region" evidence="3">
    <location>
        <begin position="36"/>
        <end position="64"/>
    </location>
</feature>
<feature type="compositionally biased region" description="Low complexity" evidence="5">
    <location>
        <begin position="206"/>
        <end position="225"/>
    </location>
</feature>
<feature type="compositionally biased region" description="Pro residues" evidence="5">
    <location>
        <begin position="236"/>
        <end position="264"/>
    </location>
</feature>
<feature type="modified residue" description="Phosphoserine" evidence="9">
    <location>
        <position position="216"/>
    </location>
</feature>
<feature type="modified residue" description="Phosphoserine" evidence="9">
    <location>
        <position position="219"/>
    </location>
</feature>
<feature type="modified residue" description="Phosphoserine" evidence="2">
    <location>
        <position position="343"/>
    </location>
</feature>
<feature type="splice variant" id="VSP_010773" description="In isoform 2." evidence="7">
    <location>
        <begin position="1"/>
        <end position="53"/>
    </location>
</feature>
<feature type="sequence conflict" description="In Ref. 4; AAH58260." evidence="8" ref="4">
    <original>T</original>
    <variation>I</variation>
    <location>
        <position position="339"/>
    </location>
</feature>